<gene>
    <name type="ordered locus">15</name>
</gene>
<proteinExistence type="evidence at protein level"/>
<organism>
    <name type="scientific">Escherichia phage T7</name>
    <name type="common">Bacteriophage T7</name>
    <dbReference type="NCBI Taxonomy" id="10760"/>
    <lineage>
        <taxon>Viruses</taxon>
        <taxon>Duplodnaviria</taxon>
        <taxon>Heunggongvirae</taxon>
        <taxon>Uroviricota</taxon>
        <taxon>Caudoviricetes</taxon>
        <taxon>Autographiviridae</taxon>
        <taxon>Studiervirinae</taxon>
        <taxon>Teseptimavirus</taxon>
        <taxon>Teseptimavirus T7</taxon>
    </lineage>
</organism>
<accession>P03725</accession>
<comment type="function">
    <text evidence="1 3 6">Component of the cylindrical core that assembles on the inner surface of the capsid during capsid formation and plays a role in viral DNA ejection into the host cell. The inner core is composed of stacked rings of gp14, gp15 and gp16 proteins. Following binding to the host cell surface, the internal core is disassembled and gp15 is ejected along with gp14 and gp16 into the infected cell. Gp15 probably remains associated with gp16. The gp15-gp16 complex binds to both the viral DNA and the host inner membrane, probably escorting the leading end of the genome through the periplasm and controlling the extend of DNA translocated into the host cell.</text>
</comment>
<comment type="subunit">
    <text evidence="1 2 4 6">Homooctamer (PubMed:12614603). Interacts with gp16; after ejection the gp15-gp16 complex composed of a gp15 octamer and a gp16 tetramer probably binds both the viral DNA and the host inner membrane (PubMed:26476287). Interacts with gp14.</text>
</comment>
<comment type="subcellular location">
    <subcellularLocation>
        <location evidence="1 5">Virion</location>
    </subcellularLocation>
    <subcellularLocation>
        <location evidence="1 7">Host periplasm</location>
    </subcellularLocation>
    <text evidence="1">The gp15-gp16 complex spans the periplasm and the cytoplasmic membrane.</text>
</comment>
<comment type="similarity">
    <text evidence="1">Belongs to the T7virus internal virion protein gp15 family.</text>
</comment>
<sequence>MSKIESALQAAQPGLSRLRGGAGGMGYRAATTQAEQPRSSLLDTIGRFAKAGADMYTAKEQRARDLADERSNEIIRKLTPEQRREALNNGTLLYQDDPYAMEALRVKTGRNAAYLVDDDVMQKIKEGVFRTREEMEEYRHSRLQEGAKVYAEQFGIDPEDVDYQRGFNGDITERNISLYGAHDNFLSQQAQKGAIMNSRVELNGVLQDPDMLRRPDSADFFEKYIDNGLVTGAIPSDAQATQLISQAFSDASSRAGGADFLMRVGDKKVTLNGATTTYRELIGEEQWNALMVTAQRSQFETDAKLNEQYRLKINSALNQEDPRTAWEMLQGIKAELDKVQPDEQMTPQREWLISAQEQVQNQMNAWTKAQAKALDDSMKSMNKLDVIDKQFQKRINGEWVSTDFKDMPVNENTGEFKHSDMVNYANKKLAEIDSMDIPDGAKDAMKLKYLQADSKDGAFRTAIGTMVTDAGQEWSAAVINGKLPERTPAMDALRRIRNADPQLIAALYPDQAELFLTMDMMDKQGIDPQVILDADRLTVKRSKEQRFEDDKAFESALNASKAPEIARMPASLRESARKIYDSVKYRSGNESMAMEQMTKFLKESTYTFTGDDVDGDTVGVIPKNMMQVNSDPKSWEQGRDILEEARKGIIASNPWITNKQLTMYSQGDSIYLMDTTGQVRVRYDKELLSKVWSENQKKLEEKAREKALADVNKRAPIVAATKAREAAAKRVREKRKQTPKFIYGRKE</sequence>
<feature type="chain" id="PRO_0000106529" description="Internal virion protein gp15">
    <location>
        <begin position="1"/>
        <end position="747"/>
    </location>
</feature>
<feature type="helix" evidence="9">
    <location>
        <begin position="6"/>
        <end position="9"/>
    </location>
</feature>
<feature type="strand" evidence="9">
    <location>
        <begin position="13"/>
        <end position="16"/>
    </location>
</feature>
<feature type="helix" evidence="9">
    <location>
        <begin position="37"/>
        <end position="52"/>
    </location>
</feature>
<feature type="helix" evidence="8">
    <location>
        <begin position="58"/>
        <end position="76"/>
    </location>
</feature>
<feature type="helix" evidence="8">
    <location>
        <begin position="80"/>
        <end position="89"/>
    </location>
</feature>
<feature type="turn" evidence="8">
    <location>
        <begin position="93"/>
        <end position="96"/>
    </location>
</feature>
<feature type="helix" evidence="8">
    <location>
        <begin position="98"/>
        <end position="126"/>
    </location>
</feature>
<feature type="helix" evidence="8">
    <location>
        <begin position="132"/>
        <end position="151"/>
    </location>
</feature>
<feature type="turn" evidence="8">
    <location>
        <begin position="152"/>
        <end position="155"/>
    </location>
</feature>
<feature type="helix" evidence="8">
    <location>
        <begin position="161"/>
        <end position="168"/>
    </location>
</feature>
<feature type="helix" evidence="8">
    <location>
        <begin position="171"/>
        <end position="202"/>
    </location>
</feature>
<feature type="turn" evidence="8">
    <location>
        <begin position="203"/>
        <end position="205"/>
    </location>
</feature>
<feature type="strand" evidence="8">
    <location>
        <begin position="206"/>
        <end position="208"/>
    </location>
</feature>
<feature type="helix" evidence="8">
    <location>
        <begin position="209"/>
        <end position="212"/>
    </location>
</feature>
<feature type="helix" evidence="8">
    <location>
        <begin position="215"/>
        <end position="231"/>
    </location>
</feature>
<feature type="strand" evidence="8">
    <location>
        <begin position="232"/>
        <end position="234"/>
    </location>
</feature>
<feature type="helix" evidence="8">
    <location>
        <begin position="237"/>
        <end position="251"/>
    </location>
</feature>
<feature type="helix" evidence="8">
    <location>
        <begin position="257"/>
        <end position="264"/>
    </location>
</feature>
<feature type="strand" evidence="8">
    <location>
        <begin position="267"/>
        <end position="271"/>
    </location>
</feature>
<feature type="strand" evidence="8">
    <location>
        <begin position="274"/>
        <end position="277"/>
    </location>
</feature>
<feature type="helix" evidence="8">
    <location>
        <begin position="278"/>
        <end position="281"/>
    </location>
</feature>
<feature type="helix" evidence="8">
    <location>
        <begin position="284"/>
        <end position="296"/>
    </location>
</feature>
<feature type="helix" evidence="8">
    <location>
        <begin position="297"/>
        <end position="299"/>
    </location>
</feature>
<feature type="helix" evidence="8">
    <location>
        <begin position="303"/>
        <end position="316"/>
    </location>
</feature>
<feature type="helix" evidence="8">
    <location>
        <begin position="322"/>
        <end position="336"/>
    </location>
</feature>
<feature type="turn" evidence="8">
    <location>
        <begin position="337"/>
        <end position="339"/>
    </location>
</feature>
<feature type="strand" evidence="8">
    <location>
        <begin position="342"/>
        <end position="344"/>
    </location>
</feature>
<feature type="helix" evidence="8">
    <location>
        <begin position="347"/>
        <end position="395"/>
    </location>
</feature>
<feature type="helix" evidence="8">
    <location>
        <begin position="404"/>
        <end position="406"/>
    </location>
</feature>
<feature type="turn" evidence="8">
    <location>
        <begin position="411"/>
        <end position="413"/>
    </location>
</feature>
<feature type="helix" evidence="8">
    <location>
        <begin position="418"/>
        <end position="433"/>
    </location>
</feature>
<feature type="strand" evidence="8">
    <location>
        <begin position="435"/>
        <end position="437"/>
    </location>
</feature>
<feature type="helix" evidence="8">
    <location>
        <begin position="439"/>
        <end position="452"/>
    </location>
</feature>
<feature type="helix" evidence="8">
    <location>
        <begin position="458"/>
        <end position="480"/>
    </location>
</feature>
<feature type="helix" evidence="8">
    <location>
        <begin position="488"/>
        <end position="499"/>
    </location>
</feature>
<feature type="helix" evidence="8">
    <location>
        <begin position="501"/>
        <end position="507"/>
    </location>
</feature>
<feature type="helix" evidence="8">
    <location>
        <begin position="509"/>
        <end position="524"/>
    </location>
</feature>
<feature type="helix" evidence="8">
    <location>
        <begin position="528"/>
        <end position="539"/>
    </location>
</feature>
<feature type="helix" evidence="8">
    <location>
        <begin position="543"/>
        <end position="558"/>
    </location>
</feature>
<feature type="helix" evidence="8">
    <location>
        <begin position="563"/>
        <end position="566"/>
    </location>
</feature>
<feature type="helix" evidence="8">
    <location>
        <begin position="570"/>
        <end position="586"/>
    </location>
</feature>
<feature type="helix" evidence="8">
    <location>
        <begin position="590"/>
        <end position="602"/>
    </location>
</feature>
<feature type="strand" evidence="8">
    <location>
        <begin position="605"/>
        <end position="609"/>
    </location>
</feature>
<feature type="strand" evidence="8">
    <location>
        <begin position="616"/>
        <end position="622"/>
    </location>
</feature>
<feature type="helix" evidence="8">
    <location>
        <begin position="623"/>
        <end position="625"/>
    </location>
</feature>
<feature type="strand" evidence="8">
    <location>
        <begin position="628"/>
        <end position="631"/>
    </location>
</feature>
<feature type="helix" evidence="8">
    <location>
        <begin position="632"/>
        <end position="634"/>
    </location>
</feature>
<feature type="helix" evidence="8">
    <location>
        <begin position="635"/>
        <end position="652"/>
    </location>
</feature>
<feature type="strand" evidence="8">
    <location>
        <begin position="656"/>
        <end position="659"/>
    </location>
</feature>
<feature type="strand" evidence="8">
    <location>
        <begin position="662"/>
        <end position="666"/>
    </location>
</feature>
<feature type="strand" evidence="8">
    <location>
        <begin position="669"/>
        <end position="673"/>
    </location>
</feature>
<feature type="strand" evidence="8">
    <location>
        <begin position="675"/>
        <end position="684"/>
    </location>
</feature>
<feature type="helix" evidence="8">
    <location>
        <begin position="685"/>
        <end position="704"/>
    </location>
</feature>
<protein>
    <recommendedName>
        <fullName evidence="1">Internal virion protein gp15</fullName>
    </recommendedName>
    <alternativeName>
        <fullName>Gene product 15</fullName>
        <shortName>Gp15</shortName>
    </alternativeName>
</protein>
<organismHost>
    <name type="scientific">Escherichia coli</name>
    <dbReference type="NCBI Taxonomy" id="562"/>
</organismHost>
<dbReference type="EMBL" id="V01146">
    <property type="protein sequence ID" value="CAA24433.1"/>
    <property type="molecule type" value="Genomic_DNA"/>
</dbReference>
<dbReference type="PIR" id="A04351">
    <property type="entry name" value="HIBPC7"/>
</dbReference>
<dbReference type="RefSeq" id="NP_042003.1">
    <property type="nucleotide sequence ID" value="NC_001604.1"/>
</dbReference>
<dbReference type="PDB" id="6YSZ">
    <property type="method" value="EM"/>
    <property type="resolution" value="3.60 A"/>
    <property type="chains" value="A/B/C/D/E/F=1-747"/>
</dbReference>
<dbReference type="PDB" id="6YT5">
    <property type="method" value="EM"/>
    <property type="resolution" value="3.00 A"/>
    <property type="chains" value="A/B/C/D/E/F=1-747"/>
</dbReference>
<dbReference type="PDB" id="7EYB">
    <property type="method" value="EM"/>
    <property type="resolution" value="3.70 A"/>
    <property type="chains" value="A/B/C/D/E/F/G/H=1-747"/>
</dbReference>
<dbReference type="PDB" id="7K5C">
    <property type="method" value="EM"/>
    <property type="resolution" value="2.70 A"/>
    <property type="chains" value="A/C/E/H/I/K=1-747"/>
</dbReference>
<dbReference type="PDB" id="8E4G">
    <property type="method" value="EM"/>
    <property type="resolution" value="3.20 A"/>
    <property type="chains" value="x=1-55"/>
</dbReference>
<dbReference type="PDB" id="9JYY">
    <property type="method" value="EM"/>
    <property type="resolution" value="3.00 A"/>
    <property type="chains" value="G/H/M/N/O/P/Q/R=1-747"/>
</dbReference>
<dbReference type="PDBsum" id="6YSZ"/>
<dbReference type="PDBsum" id="6YT5"/>
<dbReference type="PDBsum" id="7EYB"/>
<dbReference type="PDBsum" id="7K5C"/>
<dbReference type="PDBsum" id="8E4G"/>
<dbReference type="PDBsum" id="9JYY"/>
<dbReference type="EMDB" id="EMD-10911"/>
<dbReference type="EMDB" id="EMD-10912"/>
<dbReference type="EMDB" id="EMD-22680"/>
<dbReference type="EMDB" id="EMD-5566"/>
<dbReference type="EMDB" id="EMD-5567"/>
<dbReference type="EMDB" id="EMD-5568"/>
<dbReference type="EMDB" id="EMD-5569"/>
<dbReference type="EMDB" id="EMD-5570"/>
<dbReference type="EMDB" id="EMD-5571"/>
<dbReference type="EMDB" id="EMD-5572"/>
<dbReference type="EMDB" id="EMD-5573"/>
<dbReference type="EMDB" id="EMD-61909"/>
<dbReference type="SMR" id="P03725"/>
<dbReference type="IntAct" id="P03725">
    <property type="interactions" value="1"/>
</dbReference>
<dbReference type="MINT" id="P03725"/>
<dbReference type="TCDB" id="3.A.17.1.1">
    <property type="family name" value="the phage t7 injectisome (t7 injectisome) family"/>
</dbReference>
<dbReference type="KEGG" id="vg:1261034"/>
<dbReference type="OrthoDB" id="2551at10239"/>
<dbReference type="Proteomes" id="UP000000840">
    <property type="component" value="Genome"/>
</dbReference>
<dbReference type="GO" id="GO:0044229">
    <property type="term" value="C:host cell periplasmic space"/>
    <property type="evidence" value="ECO:0007669"/>
    <property type="project" value="UniProtKB-SubCell"/>
</dbReference>
<dbReference type="GO" id="GO:0044423">
    <property type="term" value="C:virion component"/>
    <property type="evidence" value="ECO:0007669"/>
    <property type="project" value="UniProtKB-KW"/>
</dbReference>
<dbReference type="GO" id="GO:0099002">
    <property type="term" value="P:symbiont genome ejection through host cell envelope, short tail mechanism"/>
    <property type="evidence" value="ECO:0007669"/>
    <property type="project" value="UniProtKB-UniRule"/>
</dbReference>
<dbReference type="HAMAP" id="MF_04122">
    <property type="entry name" value="GP15_T7"/>
    <property type="match status" value="1"/>
</dbReference>
<dbReference type="InterPro" id="IPR038993">
    <property type="entry name" value="Gp15"/>
</dbReference>
<evidence type="ECO:0000255" key="1">
    <source>
        <dbReference type="HAMAP-Rule" id="MF_04122"/>
    </source>
</evidence>
<evidence type="ECO:0000269" key="2">
    <source>
    </source>
</evidence>
<evidence type="ECO:0000269" key="3">
    <source>
    </source>
</evidence>
<evidence type="ECO:0000269" key="4">
    <source>
    </source>
</evidence>
<evidence type="ECO:0000269" key="5">
    <source>
    </source>
</evidence>
<evidence type="ECO:0000269" key="6">
    <source>
    </source>
</evidence>
<evidence type="ECO:0000305" key="7">
    <source>
    </source>
</evidence>
<evidence type="ECO:0007829" key="8">
    <source>
        <dbReference type="PDB" id="7K5C"/>
    </source>
</evidence>
<evidence type="ECO:0007829" key="9">
    <source>
        <dbReference type="PDB" id="8E4G"/>
    </source>
</evidence>
<name>GP15_BPT7</name>
<reference key="1">
    <citation type="journal article" date="1983" name="J. Mol. Biol.">
        <title>Complete nucleotide sequence of bacteriophage T7 DNA and the locations of T7 genetic elements.</title>
        <authorList>
            <person name="Dunn J.J."/>
            <person name="Studier F.W."/>
        </authorList>
    </citation>
    <scope>NUCLEOTIDE SEQUENCE [LARGE SCALE GENOMIC DNA]</scope>
</reference>
<reference key="2">
    <citation type="journal article" date="2003" name="J. Mol. Biol.">
        <title>A second symmetry mismatch at the portal vertex of bacteriophage T7: 8-fold symmetry in the procapsid core.</title>
        <authorList>
            <person name="Cerritelli M.E."/>
            <person name="Trus B.L."/>
            <person name="Smith C.S."/>
            <person name="Cheng N."/>
            <person name="Conway J.F."/>
            <person name="Steven A.C."/>
        </authorList>
    </citation>
    <scope>VIRION</scope>
    <scope>SUBUNIT</scope>
</reference>
<reference key="3">
    <citation type="journal article" date="2010" name="Virology">
        <title>Gp15 and gp16 cooperate in translocating bacteriophage T7 DNA into the infected cell.</title>
        <authorList>
            <person name="Chang C.Y."/>
            <person name="Kemp P."/>
            <person name="Molineux I.J."/>
        </authorList>
    </citation>
    <scope>FUNCTION</scope>
</reference>
<reference key="4">
    <citation type="journal article" date="2013" name="Proc. Natl. Acad. Sci. U.S.A.">
        <title>Visualization of uncorrelated, tandem symmetry mismatches in the internal genome packaging apparatus of bacteriophage T7.</title>
        <authorList>
            <person name="Guo F."/>
            <person name="Liu Z."/>
            <person name="Vago F."/>
            <person name="Ren Y."/>
            <person name="Wu W."/>
            <person name="Wright E.T."/>
            <person name="Serwer P."/>
            <person name="Jiang W."/>
        </authorList>
    </citation>
    <scope>INTERACTION WITH GP14 AND GP16</scope>
</reference>
<reference key="5">
    <citation type="journal article" date="2013" name="J. Biol. Chem.">
        <title>Structural characterization of the bacteriophage T7 tail machinery.</title>
        <authorList>
            <person name="Cuervo A."/>
            <person name="Pulido-Cid M."/>
            <person name="Chagoyen M."/>
            <person name="Arranz R."/>
            <person name="Gonzalez-Garcia V.A."/>
            <person name="Garcia-Doval C."/>
            <person name="Caston J.R."/>
            <person name="Valpuesta J.M."/>
            <person name="van Raaij M.J."/>
            <person name="Martin-Benito J."/>
            <person name="Carrascosa J.L."/>
        </authorList>
    </citation>
    <scope>SUBCELLULAR LOCATION</scope>
</reference>
<reference key="6">
    <citation type="journal article" date="2015" name="Virology">
        <title>The T7 ejection nanomachine components gp15-gp16 form a spiral ring complex that binds DNA and a lipid membrane.</title>
        <authorList>
            <person name="Lupo D."/>
            <person name="Leptihn S."/>
            <person name="Nagler G."/>
            <person name="Haase M."/>
            <person name="Molineux I.J."/>
            <person name="Kuhn A."/>
        </authorList>
    </citation>
    <scope>INTERACTION WITH GP16</scope>
    <scope>SUBCELLULAR LOCATION</scope>
    <scope>FUNCTION</scope>
</reference>
<keyword id="KW-0002">3D-structure</keyword>
<keyword id="KW-1049">Host periplasm</keyword>
<keyword id="KW-1185">Reference proteome</keyword>
<keyword id="KW-1171">Viral genome ejection through host cell envelope</keyword>
<keyword id="KW-1162">Viral penetration into host cytoplasm</keyword>
<keyword id="KW-1244">Viral short tail ejection system</keyword>
<keyword id="KW-0946">Virion</keyword>
<keyword id="KW-1160">Virus entry into host cell</keyword>